<evidence type="ECO:0000255" key="1">
    <source>
        <dbReference type="HAMAP-Rule" id="MF_01679"/>
    </source>
</evidence>
<reference key="1">
    <citation type="journal article" date="2007" name="J. Bacteriol.">
        <title>The complete genome sequence of Bacillus thuringiensis Al Hakam.</title>
        <authorList>
            <person name="Challacombe J.F."/>
            <person name="Altherr M.R."/>
            <person name="Xie G."/>
            <person name="Bhotika S.S."/>
            <person name="Brown N."/>
            <person name="Bruce D."/>
            <person name="Campbell C.S."/>
            <person name="Campbell M.L."/>
            <person name="Chen J."/>
            <person name="Chertkov O."/>
            <person name="Cleland C."/>
            <person name="Dimitrijevic M."/>
            <person name="Doggett N.A."/>
            <person name="Fawcett J.J."/>
            <person name="Glavina T."/>
            <person name="Goodwin L.A."/>
            <person name="Green L.D."/>
            <person name="Han C.S."/>
            <person name="Hill K.K."/>
            <person name="Hitchcock P."/>
            <person name="Jackson P.J."/>
            <person name="Keim P."/>
            <person name="Kewalramani A.R."/>
            <person name="Longmire J."/>
            <person name="Lucas S."/>
            <person name="Malfatti S."/>
            <person name="Martinez D."/>
            <person name="McMurry K."/>
            <person name="Meincke L.J."/>
            <person name="Misra M."/>
            <person name="Moseman B.L."/>
            <person name="Mundt M."/>
            <person name="Munk A.C."/>
            <person name="Okinaka R.T."/>
            <person name="Parson-Quintana B."/>
            <person name="Reilly L.P."/>
            <person name="Richardson P."/>
            <person name="Robinson D.L."/>
            <person name="Saunders E."/>
            <person name="Tapia R."/>
            <person name="Tesmer J.G."/>
            <person name="Thayer N."/>
            <person name="Thompson L.S."/>
            <person name="Tice H."/>
            <person name="Ticknor L.O."/>
            <person name="Wills P.L."/>
            <person name="Gilna P."/>
            <person name="Brettin T.S."/>
        </authorList>
    </citation>
    <scope>NUCLEOTIDE SEQUENCE [LARGE SCALE GENOMIC DNA]</scope>
    <source>
        <strain>Al Hakam</strain>
    </source>
</reference>
<protein>
    <recommendedName>
        <fullName evidence="1">2,3-diketo-5-methylthiopentyl-1-phosphate enolase</fullName>
        <shortName evidence="1">DK-MTP-1-P enolase</shortName>
        <ecNumber evidence="1">5.3.2.5</ecNumber>
    </recommendedName>
    <alternativeName>
        <fullName evidence="1">RuBisCO-like protein</fullName>
        <shortName evidence="1">RLP</shortName>
    </alternativeName>
</protein>
<dbReference type="EC" id="5.3.2.5" evidence="1"/>
<dbReference type="EMBL" id="CP000485">
    <property type="protein sequence ID" value="ABK86885.1"/>
    <property type="molecule type" value="Genomic_DNA"/>
</dbReference>
<dbReference type="RefSeq" id="WP_000014187.1">
    <property type="nucleotide sequence ID" value="NC_008600.1"/>
</dbReference>
<dbReference type="SMR" id="A0RI42"/>
<dbReference type="KEGG" id="btl:BALH_3653"/>
<dbReference type="HOGENOM" id="CLU_031450_3_1_9"/>
<dbReference type="UniPathway" id="UPA00904">
    <property type="reaction ID" value="UER00876"/>
</dbReference>
<dbReference type="GO" id="GO:0043715">
    <property type="term" value="F:2,3-diketo-5-methylthiopentyl-1-phosphate enolase activity"/>
    <property type="evidence" value="ECO:0007669"/>
    <property type="project" value="UniProtKB-UniRule"/>
</dbReference>
<dbReference type="GO" id="GO:0000287">
    <property type="term" value="F:magnesium ion binding"/>
    <property type="evidence" value="ECO:0007669"/>
    <property type="project" value="UniProtKB-UniRule"/>
</dbReference>
<dbReference type="GO" id="GO:0016984">
    <property type="term" value="F:ribulose-bisphosphate carboxylase activity"/>
    <property type="evidence" value="ECO:0007669"/>
    <property type="project" value="InterPro"/>
</dbReference>
<dbReference type="GO" id="GO:0015977">
    <property type="term" value="P:carbon fixation"/>
    <property type="evidence" value="ECO:0007669"/>
    <property type="project" value="InterPro"/>
</dbReference>
<dbReference type="GO" id="GO:0019509">
    <property type="term" value="P:L-methionine salvage from methylthioadenosine"/>
    <property type="evidence" value="ECO:0007669"/>
    <property type="project" value="UniProtKB-UniRule"/>
</dbReference>
<dbReference type="CDD" id="cd08209">
    <property type="entry name" value="RLP_DK-MTP-1-P-enolase"/>
    <property type="match status" value="1"/>
</dbReference>
<dbReference type="FunFam" id="3.20.20.110:FF:000002">
    <property type="entry name" value="2,3-diketo-5-methylthiopentyl-1-phosphate enolase"/>
    <property type="match status" value="1"/>
</dbReference>
<dbReference type="Gene3D" id="3.20.20.110">
    <property type="entry name" value="Ribulose bisphosphate carboxylase, large subunit, C-terminal domain"/>
    <property type="match status" value="1"/>
</dbReference>
<dbReference type="Gene3D" id="3.30.70.150">
    <property type="entry name" value="RuBisCO large subunit, N-terminal domain"/>
    <property type="match status" value="1"/>
</dbReference>
<dbReference type="HAMAP" id="MF_01679">
    <property type="entry name" value="Salvage_MtnW"/>
    <property type="match status" value="1"/>
</dbReference>
<dbReference type="InterPro" id="IPR017717">
    <property type="entry name" value="Diketo-Methiopentyl-P_enolase"/>
</dbReference>
<dbReference type="InterPro" id="IPR033966">
    <property type="entry name" value="RuBisCO"/>
</dbReference>
<dbReference type="InterPro" id="IPR000685">
    <property type="entry name" value="RuBisCO_lsu_C"/>
</dbReference>
<dbReference type="InterPro" id="IPR036376">
    <property type="entry name" value="RuBisCO_lsu_C_sf"/>
</dbReference>
<dbReference type="InterPro" id="IPR017443">
    <property type="entry name" value="RuBisCO_lsu_fd_N"/>
</dbReference>
<dbReference type="InterPro" id="IPR036422">
    <property type="entry name" value="RuBisCO_lsu_N_sf"/>
</dbReference>
<dbReference type="NCBIfam" id="NF007095">
    <property type="entry name" value="PRK09549.1"/>
    <property type="match status" value="1"/>
</dbReference>
<dbReference type="NCBIfam" id="TIGR03332">
    <property type="entry name" value="salvage_mtnW"/>
    <property type="match status" value="1"/>
</dbReference>
<dbReference type="PANTHER" id="PTHR42704">
    <property type="entry name" value="RIBULOSE BISPHOSPHATE CARBOXYLASE"/>
    <property type="match status" value="1"/>
</dbReference>
<dbReference type="PANTHER" id="PTHR42704:SF17">
    <property type="entry name" value="RIBULOSE BISPHOSPHATE CARBOXYLASE LARGE CHAIN"/>
    <property type="match status" value="1"/>
</dbReference>
<dbReference type="Pfam" id="PF00016">
    <property type="entry name" value="RuBisCO_large"/>
    <property type="match status" value="1"/>
</dbReference>
<dbReference type="Pfam" id="PF02788">
    <property type="entry name" value="RuBisCO_large_N"/>
    <property type="match status" value="1"/>
</dbReference>
<dbReference type="SFLD" id="SFLDF00157">
    <property type="entry name" value="2_3-diketo-5-methylthiopentyl"/>
    <property type="match status" value="1"/>
</dbReference>
<dbReference type="SFLD" id="SFLDG00301">
    <property type="entry name" value="RuBisCO-like_proteins"/>
    <property type="match status" value="1"/>
</dbReference>
<dbReference type="SUPFAM" id="SSF51649">
    <property type="entry name" value="RuBisCo, C-terminal domain"/>
    <property type="match status" value="1"/>
</dbReference>
<dbReference type="SUPFAM" id="SSF54966">
    <property type="entry name" value="RuBisCO, large subunit, small (N-terminal) domain"/>
    <property type="match status" value="1"/>
</dbReference>
<comment type="function">
    <text evidence="1">Catalyzes the enolization of 2,3-diketo-5-methylthiopentyl-1-phosphate (DK-MTP-1-P) into 2-hydroxy-3-keto-5-methylthiopentenyl-1-phosphate (HK-MTPenyl-1-P).</text>
</comment>
<comment type="catalytic activity">
    <reaction evidence="1">
        <text>5-methylsulfanyl-2,3-dioxopentyl phosphate = 2-hydroxy-5-methylsulfanyl-3-oxopent-1-enyl phosphate</text>
        <dbReference type="Rhea" id="RHEA:18769"/>
        <dbReference type="ChEBI" id="CHEBI:58828"/>
        <dbReference type="ChEBI" id="CHEBI:59505"/>
        <dbReference type="EC" id="5.3.2.5"/>
    </reaction>
</comment>
<comment type="cofactor">
    <cofactor evidence="1">
        <name>Mg(2+)</name>
        <dbReference type="ChEBI" id="CHEBI:18420"/>
    </cofactor>
    <text evidence="1">Binds 1 Mg(2+) ion per subunit.</text>
</comment>
<comment type="pathway">
    <text evidence="1">Amino-acid biosynthesis; L-methionine biosynthesis via salvage pathway; L-methionine from S-methyl-5-thio-alpha-D-ribose 1-phosphate: step 3/6.</text>
</comment>
<comment type="subunit">
    <text evidence="1">Homodimer.</text>
</comment>
<comment type="miscellaneous">
    <text evidence="1">Has no RuBP-carboxylation activity.</text>
</comment>
<comment type="similarity">
    <text evidence="1">Belongs to the RuBisCO large chain family. Type IV subfamily.</text>
</comment>
<feature type="chain" id="PRO_0000357287" description="2,3-diketo-5-methylthiopentyl-1-phosphate enolase">
    <location>
        <begin position="1"/>
        <end position="414"/>
    </location>
</feature>
<feature type="active site" description="Proton acceptor" evidence="1">
    <location>
        <position position="99"/>
    </location>
</feature>
<feature type="binding site" evidence="1">
    <location>
        <position position="148"/>
    </location>
    <ligand>
        <name>substrate</name>
    </ligand>
</feature>
<feature type="binding site" evidence="1">
    <location>
        <begin position="174"/>
        <end position="177"/>
    </location>
    <ligand>
        <name>substrate</name>
    </ligand>
</feature>
<feature type="binding site" description="via carbamate group" evidence="1">
    <location>
        <position position="174"/>
    </location>
    <ligand>
        <name>Mg(2+)</name>
        <dbReference type="ChEBI" id="CHEBI:18420"/>
    </ligand>
</feature>
<feature type="binding site" evidence="1">
    <location>
        <position position="176"/>
    </location>
    <ligand>
        <name>Mg(2+)</name>
        <dbReference type="ChEBI" id="CHEBI:18420"/>
    </ligand>
</feature>
<feature type="binding site" evidence="1">
    <location>
        <position position="177"/>
    </location>
    <ligand>
        <name>Mg(2+)</name>
        <dbReference type="ChEBI" id="CHEBI:18420"/>
    </ligand>
</feature>
<feature type="binding site" evidence="1">
    <location>
        <position position="265"/>
    </location>
    <ligand>
        <name>substrate</name>
    </ligand>
</feature>
<feature type="binding site" evidence="1">
    <location>
        <position position="338"/>
    </location>
    <ligand>
        <name>substrate</name>
    </ligand>
</feature>
<feature type="binding site" evidence="1">
    <location>
        <begin position="360"/>
        <end position="361"/>
    </location>
    <ligand>
        <name>substrate</name>
    </ligand>
</feature>
<feature type="modified residue" description="N6-carboxylysine" evidence="1">
    <location>
        <position position="174"/>
    </location>
</feature>
<keyword id="KW-0028">Amino-acid biosynthesis</keyword>
<keyword id="KW-0413">Isomerase</keyword>
<keyword id="KW-0460">Magnesium</keyword>
<keyword id="KW-0479">Metal-binding</keyword>
<keyword id="KW-0486">Methionine biosynthesis</keyword>
<accession>A0RI42</accession>
<name>MTNW_BACAH</name>
<organism>
    <name type="scientific">Bacillus thuringiensis (strain Al Hakam)</name>
    <dbReference type="NCBI Taxonomy" id="412694"/>
    <lineage>
        <taxon>Bacteria</taxon>
        <taxon>Bacillati</taxon>
        <taxon>Bacillota</taxon>
        <taxon>Bacilli</taxon>
        <taxon>Bacillales</taxon>
        <taxon>Bacillaceae</taxon>
        <taxon>Bacillus</taxon>
        <taxon>Bacillus cereus group</taxon>
    </lineage>
</organism>
<sequence>MSGIIATYLIHDDSHNLEKKAEQIALGLTIGSWTHLPHLLQEQLKQHKGNVIHVEELAEHEHTNSYLRKKVKRGIIKIEYPLLNFSPDLPAILTTTFGKLSLDGEVKLIDLTFSDELKKHFPGPKFGIDGIRNLLQVHDRPLLMSIFKGMIGRNIGYLKTQLRDQAIGGVDIVKDDEILFENALTPLTKRIVSGKEVLQSVYETYGHKTLYAVNVTGRTFDLKENAKRAVQAGADILLFNVFAYGLDVLQSLAEDDEIPVPIMAHPAVSGAYSASKLYGISSPLLLGKLLRYAGADFSLFPSPYGSVALEKEEALAISKYLTEDDVFFKKSFSVPSAGIHPGFVPFIIRDFGKDVVINAGGGIHGHPNGAQGGGKAFRTAIDATLQNKPLHEVDDINLHSALQIWGNPSHEVKL</sequence>
<proteinExistence type="inferred from homology"/>
<gene>
    <name evidence="1" type="primary">mtnW</name>
    <name type="ordered locus">BALH_3653</name>
</gene>